<comment type="function">
    <text evidence="3">Efflux pump that mediates resistance to quinolone-type antibiotics.</text>
</comment>
<comment type="subcellular location">
    <subcellularLocation>
        <location evidence="5">Cell inner membrane</location>
        <topology evidence="1">Multi-pass membrane protein</topology>
    </subcellularLocation>
</comment>
<comment type="disruption phenotype">
    <text evidence="2 3">Inactivation of the gene causes a significant reduction in the surface-associated motility and virulence (PubMed:28507065). Mutant has 2- to 4-fold higher susceptibility to novobiocin and trimethoprim, and 8- to 32-fold higher susceptibility to the quinolone-type antibiotics nalidixic acid, levofloxacin and ciprofloxacin (PubMed:29941648). Mutation does not affect susceptibility to beta-lactams, aminoglycosides, macrolides and polymyxins (PubMed:29941648).</text>
</comment>
<comment type="similarity">
    <text evidence="5">Belongs to the major facilitator superfamily.</text>
</comment>
<evidence type="ECO:0000255" key="1"/>
<evidence type="ECO:0000269" key="2">
    <source>
    </source>
</evidence>
<evidence type="ECO:0000269" key="3">
    <source>
    </source>
</evidence>
<evidence type="ECO:0000303" key="4">
    <source>
    </source>
</evidence>
<evidence type="ECO:0000305" key="5"/>
<organism>
    <name type="scientific">Acinetobacter baumannii</name>
    <dbReference type="NCBI Taxonomy" id="470"/>
    <lineage>
        <taxon>Bacteria</taxon>
        <taxon>Pseudomonadati</taxon>
        <taxon>Pseudomonadota</taxon>
        <taxon>Gammaproteobacteria</taxon>
        <taxon>Moraxellales</taxon>
        <taxon>Moraxellaceae</taxon>
        <taxon>Acinetobacter</taxon>
        <taxon>Acinetobacter calcoaceticus/baumannii complex</taxon>
    </lineage>
</organism>
<gene>
    <name evidence="4" type="primary">abaQ</name>
    <name type="ORF">AUO97_17040</name>
</gene>
<sequence length="434" mass="47931">MDFEKDVIRTVTFKLIPALVILYLVAYIDRAAVGFAHLHMGADVGIGDAAYGLGAGLFFIGYFLFEVPSNLLLDKFGARKWFTRILLTWGLITMAMALIQGPKSFYLLRFLLGVAEAGFFPGVLYLITQWYPVRHRGKIMGMFVLSQPIAMMIAGPLAGLLLGMDGIANLHGWQWLFVAVGLPAVLLALPTFLWLPDNIDKVKWLSIEQKQWLKNELVKDEAEYDQTRHANPLHALKDKRVLLLALYYLPVTLSIYGLNLWLPTIIKQFGGGSDIQIGFLSSIPYIFGIIGLLIIPRSTDRLNDRYGHLSFLYALGACAMFLSGWLNSPVMQLAALAVVAFCLFSSTAVFWTLPGRFLTGASAAAGIALINSVGNLGGYVGPFGIGLLKEYTGNMAAGLYFLSIVMLFGLILTYIVYAKLERQKTQTVNIQKPL</sequence>
<feature type="chain" id="PRO_0000445957" description="Quinolone resistance transporter">
    <location>
        <begin position="1"/>
        <end position="434"/>
    </location>
</feature>
<feature type="transmembrane region" description="Helical" evidence="1">
    <location>
        <begin position="15"/>
        <end position="35"/>
    </location>
</feature>
<feature type="transmembrane region" description="Helical" evidence="1">
    <location>
        <begin position="45"/>
        <end position="65"/>
    </location>
</feature>
<feature type="transmembrane region" description="Helical" evidence="1">
    <location>
        <begin position="85"/>
        <end position="105"/>
    </location>
</feature>
<feature type="transmembrane region" description="Helical" evidence="1">
    <location>
        <begin position="110"/>
        <end position="130"/>
    </location>
</feature>
<feature type="transmembrane region" description="Helical" evidence="1">
    <location>
        <begin position="142"/>
        <end position="162"/>
    </location>
</feature>
<feature type="transmembrane region" description="Helical" evidence="1">
    <location>
        <begin position="175"/>
        <end position="195"/>
    </location>
</feature>
<feature type="transmembrane region" description="Helical" evidence="1">
    <location>
        <begin position="241"/>
        <end position="261"/>
    </location>
</feature>
<feature type="transmembrane region" description="Helical" evidence="1">
    <location>
        <begin position="275"/>
        <end position="295"/>
    </location>
</feature>
<feature type="transmembrane region" description="Helical" evidence="1">
    <location>
        <begin position="306"/>
        <end position="326"/>
    </location>
</feature>
<feature type="transmembrane region" description="Helical" evidence="1">
    <location>
        <begin position="333"/>
        <end position="353"/>
    </location>
</feature>
<feature type="transmembrane region" description="Helical" evidence="1">
    <location>
        <begin position="367"/>
        <end position="387"/>
    </location>
</feature>
<feature type="transmembrane region" description="Helical" evidence="1">
    <location>
        <begin position="396"/>
        <end position="416"/>
    </location>
</feature>
<name>ABAQ_ACIBA</name>
<keyword id="KW-0046">Antibiotic resistance</keyword>
<keyword id="KW-0997">Cell inner membrane</keyword>
<keyword id="KW-1003">Cell membrane</keyword>
<keyword id="KW-0472">Membrane</keyword>
<keyword id="KW-0812">Transmembrane</keyword>
<keyword id="KW-1133">Transmembrane helix</keyword>
<keyword id="KW-0813">Transport</keyword>
<protein>
    <recommendedName>
        <fullName evidence="4">Quinolone resistance transporter</fullName>
    </recommendedName>
</protein>
<reference key="1">
    <citation type="submission" date="2016-12" db="EMBL/GenBank/DDBJ databases">
        <authorList>
            <person name="Singh M."/>
            <person name="Fernando D."/>
            <person name="Kumar A."/>
        </authorList>
    </citation>
    <scope>NUCLEOTIDE SEQUENCE [LARGE SCALE GENOMIC DNA]</scope>
    <source>
        <strain>ATCC 17978 / DSM 105126 / CIP 53.77 / LMG 1025 / NCDC KC755 / 5377</strain>
    </source>
</reference>
<reference key="2">
    <citation type="journal article" date="2017" name="Infect. Immun.">
        <title>Mutations in the beta-subunit of the RNA polymerase impair the surface-associated motility and virulence of Acinetobacter baumannii.</title>
        <authorList>
            <person name="Perez-Varela M."/>
            <person name="Corral J."/>
            <person name="Vallejo J.A."/>
            <person name="Rumbo-Feal S."/>
            <person name="Bou G."/>
            <person name="Aranda J."/>
            <person name="Barbe J."/>
        </authorList>
    </citation>
    <scope>DISRUPTION PHENOTYPE</scope>
    <source>
        <strain>ATCC 17978 / DSM 105126 / CIP 53.77 / LMG 1025 / NCDC KC755 / 5377</strain>
    </source>
</reference>
<reference key="3">
    <citation type="journal article" date="2018" name="Antimicrob. Agents Chemother.">
        <title>Functional characterization of AbaQ, a novel efflux pump mediating quinolone resistance in Acinetobacter baumannii.</title>
        <authorList>
            <person name="Perez-Varela M."/>
            <person name="Corral J."/>
            <person name="Aranda J."/>
            <person name="Barbe J."/>
        </authorList>
    </citation>
    <scope>FUNCTION IN QUINOLONE RESISTANCE</scope>
    <scope>DISRUPTION PHENOTYPE</scope>
    <source>
        <strain>ATCC 17978 / DSM 105126 / CIP 53.77 / LMG 1025 / NCDC KC755 / 5377</strain>
    </source>
</reference>
<accession>P0DPR4</accession>
<proteinExistence type="evidence at protein level"/>
<dbReference type="EMBL" id="CP018664">
    <property type="protein sequence ID" value="APP32449.1"/>
    <property type="molecule type" value="Genomic_DNA"/>
</dbReference>
<dbReference type="RefSeq" id="WP_000345069.1">
    <property type="nucleotide sequence ID" value="NZ_WYAT01000004.1"/>
</dbReference>
<dbReference type="SMR" id="P0DPR4"/>
<dbReference type="CARD" id="ARO:3004574">
    <property type="molecule name" value="Abau_AbaQ"/>
    <property type="mechanism identifier" value="ARO:0010000"/>
    <property type="mechanism name" value="antibiotic efflux"/>
</dbReference>
<dbReference type="Proteomes" id="UP000072389">
    <property type="component" value="Chromosome"/>
</dbReference>
<dbReference type="GO" id="GO:0005886">
    <property type="term" value="C:plasma membrane"/>
    <property type="evidence" value="ECO:0007669"/>
    <property type="project" value="UniProtKB-SubCell"/>
</dbReference>
<dbReference type="GO" id="GO:0022857">
    <property type="term" value="F:transmembrane transporter activity"/>
    <property type="evidence" value="ECO:0007669"/>
    <property type="project" value="InterPro"/>
</dbReference>
<dbReference type="GO" id="GO:0046677">
    <property type="term" value="P:response to antibiotic"/>
    <property type="evidence" value="ECO:0007669"/>
    <property type="project" value="UniProtKB-KW"/>
</dbReference>
<dbReference type="CDD" id="cd17319">
    <property type="entry name" value="MFS_ExuT_GudP_like"/>
    <property type="match status" value="1"/>
</dbReference>
<dbReference type="FunFam" id="1.20.1250.20:FF:000018">
    <property type="entry name" value="MFS transporter permease"/>
    <property type="match status" value="1"/>
</dbReference>
<dbReference type="Gene3D" id="1.20.1250.20">
    <property type="entry name" value="MFS general substrate transporter like domains"/>
    <property type="match status" value="2"/>
</dbReference>
<dbReference type="InterPro" id="IPR011701">
    <property type="entry name" value="MFS"/>
</dbReference>
<dbReference type="InterPro" id="IPR020846">
    <property type="entry name" value="MFS_dom"/>
</dbReference>
<dbReference type="InterPro" id="IPR036259">
    <property type="entry name" value="MFS_trans_sf"/>
</dbReference>
<dbReference type="PANTHER" id="PTHR43791">
    <property type="entry name" value="PERMEASE-RELATED"/>
    <property type="match status" value="1"/>
</dbReference>
<dbReference type="PANTHER" id="PTHR43791:SF36">
    <property type="entry name" value="TRANSPORTER, PUTATIVE (AFU_ORTHOLOGUE AFUA_6G08340)-RELATED"/>
    <property type="match status" value="1"/>
</dbReference>
<dbReference type="Pfam" id="PF07690">
    <property type="entry name" value="MFS_1"/>
    <property type="match status" value="1"/>
</dbReference>
<dbReference type="SUPFAM" id="SSF103473">
    <property type="entry name" value="MFS general substrate transporter"/>
    <property type="match status" value="1"/>
</dbReference>
<dbReference type="PROSITE" id="PS50850">
    <property type="entry name" value="MFS"/>
    <property type="match status" value="1"/>
</dbReference>